<name>TVB2_HUMAN</name>
<gene>
    <name evidence="8" type="primary">TRBV2</name>
</gene>
<protein>
    <recommendedName>
        <fullName evidence="8">T cell receptor beta variable 2</fullName>
    </recommendedName>
</protein>
<dbReference type="EMBL" id="AC245088">
    <property type="status" value="NOT_ANNOTATED_CDS"/>
    <property type="molecule type" value="Genomic_DNA"/>
</dbReference>
<dbReference type="SMR" id="A0A1B0GX68"/>
<dbReference type="FunCoup" id="A0A1B0GX68">
    <property type="interactions" value="389"/>
</dbReference>
<dbReference type="IMGT_GENE-DB" id="TRBV2"/>
<dbReference type="GlyCosmos" id="A0A1B0GX68">
    <property type="glycosylation" value="1 site, No reported glycans"/>
</dbReference>
<dbReference type="GlyGen" id="A0A1B0GX68">
    <property type="glycosylation" value="1 site"/>
</dbReference>
<dbReference type="BioMuta" id="TRBV2"/>
<dbReference type="MassIVE" id="A0A1B0GX68"/>
<dbReference type="Ensembl" id="ENST00000455382.2">
    <property type="protein sequence ID" value="ENSP00000388523.3"/>
    <property type="gene ID" value="ENSG00000226660.2"/>
</dbReference>
<dbReference type="AGR" id="HGNC:12195"/>
<dbReference type="GeneCards" id="TRBV2"/>
<dbReference type="HGNC" id="HGNC:12195">
    <property type="gene designation" value="TRBV2"/>
</dbReference>
<dbReference type="HPA" id="ENSG00000226660">
    <property type="expression patterns" value="Tissue enriched (lymphoid)"/>
</dbReference>
<dbReference type="neXtProt" id="NX_A0A1B0GX68"/>
<dbReference type="OpenTargets" id="ENSG00000226660"/>
<dbReference type="VEuPathDB" id="HostDB:ENSG00000226660"/>
<dbReference type="GeneTree" id="ENSGT00940000154460"/>
<dbReference type="InParanoid" id="A0A1B0GX68"/>
<dbReference type="OMA" id="VSNHLYF"/>
<dbReference type="OrthoDB" id="9617852at2759"/>
<dbReference type="PAN-GO" id="A0A1B0GX68">
    <property type="GO annotations" value="2 GO annotations based on evolutionary models"/>
</dbReference>
<dbReference type="SignaLink" id="A0A1B0GX68"/>
<dbReference type="ChiTaRS" id="TRBV2">
    <property type="organism name" value="human"/>
</dbReference>
<dbReference type="Pharos" id="A0A1B0GX68">
    <property type="development level" value="Tdark"/>
</dbReference>
<dbReference type="PRO" id="PR:A0A1B0GX68"/>
<dbReference type="Proteomes" id="UP000005640">
    <property type="component" value="Chromosome 7"/>
</dbReference>
<dbReference type="Bgee" id="ENSG00000226660">
    <property type="expression patterns" value="Expressed in lymph node and 83 other cell types or tissues"/>
</dbReference>
<dbReference type="GO" id="GO:0005886">
    <property type="term" value="C:plasma membrane"/>
    <property type="evidence" value="ECO:0000318"/>
    <property type="project" value="GO_Central"/>
</dbReference>
<dbReference type="GO" id="GO:0042101">
    <property type="term" value="C:T cell receptor complex"/>
    <property type="evidence" value="ECO:0007669"/>
    <property type="project" value="UniProtKB-KW"/>
</dbReference>
<dbReference type="GO" id="GO:0002250">
    <property type="term" value="P:adaptive immune response"/>
    <property type="evidence" value="ECO:0007669"/>
    <property type="project" value="UniProtKB-KW"/>
</dbReference>
<dbReference type="GO" id="GO:0007166">
    <property type="term" value="P:cell surface receptor signaling pathway"/>
    <property type="evidence" value="ECO:0000318"/>
    <property type="project" value="GO_Central"/>
</dbReference>
<dbReference type="Gene3D" id="2.60.40.10">
    <property type="entry name" value="Immunoglobulins"/>
    <property type="match status" value="1"/>
</dbReference>
<dbReference type="InterPro" id="IPR007110">
    <property type="entry name" value="Ig-like_dom"/>
</dbReference>
<dbReference type="InterPro" id="IPR036179">
    <property type="entry name" value="Ig-like_dom_sf"/>
</dbReference>
<dbReference type="InterPro" id="IPR013783">
    <property type="entry name" value="Ig-like_fold"/>
</dbReference>
<dbReference type="InterPro" id="IPR013106">
    <property type="entry name" value="Ig_V-set"/>
</dbReference>
<dbReference type="InterPro" id="IPR050413">
    <property type="entry name" value="TCR_beta_variable"/>
</dbReference>
<dbReference type="PANTHER" id="PTHR23268:SF45">
    <property type="entry name" value="T CELL RECEPTOR BETA VARIABLE 2"/>
    <property type="match status" value="1"/>
</dbReference>
<dbReference type="PANTHER" id="PTHR23268">
    <property type="entry name" value="T-CELL RECEPTOR BETA CHAIN"/>
    <property type="match status" value="1"/>
</dbReference>
<dbReference type="Pfam" id="PF07686">
    <property type="entry name" value="V-set"/>
    <property type="match status" value="1"/>
</dbReference>
<dbReference type="SMART" id="SM00406">
    <property type="entry name" value="IGv"/>
    <property type="match status" value="1"/>
</dbReference>
<dbReference type="SUPFAM" id="SSF48726">
    <property type="entry name" value="Immunoglobulin"/>
    <property type="match status" value="1"/>
</dbReference>
<dbReference type="PROSITE" id="PS50835">
    <property type="entry name" value="IG_LIKE"/>
    <property type="match status" value="1"/>
</dbReference>
<evidence type="ECO:0000255" key="1"/>
<evidence type="ECO:0000255" key="2">
    <source>
        <dbReference type="PROSITE-ProRule" id="PRU00114"/>
    </source>
</evidence>
<evidence type="ECO:0000303" key="3">
    <source>
    </source>
</evidence>
<evidence type="ECO:0000303" key="4">
    <source>
    </source>
</evidence>
<evidence type="ECO:0000303" key="5">
    <source>
    </source>
</evidence>
<evidence type="ECO:0000303" key="6">
    <source>
    </source>
</evidence>
<evidence type="ECO:0000303" key="7">
    <source>
    </source>
</evidence>
<evidence type="ECO:0000303" key="8">
    <source ref="2"/>
</evidence>
<evidence type="ECO:0000305" key="9"/>
<comment type="function">
    <text evidence="3 5 6 7">V region of the variable domain of T cell receptor (TR) beta chain that participates in the antigen recognition (PubMed:24600447). Alpha-beta T cell receptors are antigen specific receptors which are essential to the immune response and are present on the cell surface of T lymphocytes. Recognize peptide-major histocompatibility (MH) (pMH) complexes that are displayed by antigen presenting cells (APC), a prerequisite for efficient T cell adaptive immunity against pathogens (PubMed:25493333). Binding of alpha-beta TR to pMH complex initiates TR-CD3 clustering on the cell surface and intracellular activation of LCK that phosphorylates the ITAM motifs of CD3G, CD3D, CD3E and CD247 enabling the recruitment of ZAP70. In turn ZAP70 phosphorylates LAT, which recruits numerous signaling molecules to form the LAT signalosome. The LAT signalosome propagates signal branching to three major signaling pathways, the calcium, the mitogen-activated protein kinase (MAPK) kinase and the nuclear factor NF-kappa-B (NF-kB) pathways, leading to the mobilization of transcription factors that are critical for gene expression and essential for T cell growth and differentiation (PubMed:23524462). The T cell repertoire is generated in the thymus, by V-(D)-J rearrangement. This repertoire is then shaped by intrathymic selection events to generate a peripheral T cell pool of self-MH restricted, non-autoaggressive T cells. Post-thymic interaction of alpha-beta TR with the pMH complexes shapes TR structural and functional avidity (PubMed:15040585).</text>
</comment>
<comment type="subunit">
    <text evidence="4">Alpha-beta TR is a heterodimer composed of an alpha and beta chain; disulfide-linked. The alpha-beta TR is associated with the transmembrane signaling CD3 coreceptor proteins to form the TR-CD3 (TcR or TCR). The assembly of alpha-beta TR heterodimers with CD3 occurs in the endoplasmic reticulum where a single alpha-beta TR heterodimer associates with one CD3D-CD3E heterodimer, one CD3G-CD3E heterodimer and one CD247 homodimer forming a stable octameric structure. CD3D-CD3E and CD3G-CD3E heterodimers preferentially associate with TR alpha and TR beta chains, respectively. The association of the CD247 homodimer is the last step of TcR assembly in the endoplasmic reticulum and is required for transport to the cell surface.</text>
</comment>
<comment type="subcellular location">
    <subcellularLocation>
        <location evidence="4">Cell membrane</location>
    </subcellularLocation>
</comment>
<comment type="polymorphism">
    <text evidence="9">There are several alleles. The sequence shown is that of IMGT allele TRBV2*01.</text>
</comment>
<keyword id="KW-1064">Adaptive immunity</keyword>
<keyword id="KW-1003">Cell membrane</keyword>
<keyword id="KW-1015">Disulfide bond</keyword>
<keyword id="KW-0325">Glycoprotein</keyword>
<keyword id="KW-0391">Immunity</keyword>
<keyword id="KW-0393">Immunoglobulin domain</keyword>
<keyword id="KW-0472">Membrane</keyword>
<keyword id="KW-1267">Proteomics identification</keyword>
<keyword id="KW-0675">Receptor</keyword>
<keyword id="KW-1185">Reference proteome</keyword>
<keyword id="KW-0732">Signal</keyword>
<keyword id="KW-1279">T cell receptor</keyword>
<proteinExistence type="evidence at protein level"/>
<reference key="1">
    <citation type="journal article" date="2003" name="Nature">
        <title>The DNA sequence of human chromosome 7.</title>
        <authorList>
            <person name="Hillier L.W."/>
            <person name="Fulton R.S."/>
            <person name="Fulton L.A."/>
            <person name="Graves T.A."/>
            <person name="Pepin K.H."/>
            <person name="Wagner-McPherson C."/>
            <person name="Layman D."/>
            <person name="Maas J."/>
            <person name="Jaeger S."/>
            <person name="Walker R."/>
            <person name="Wylie K."/>
            <person name="Sekhon M."/>
            <person name="Becker M.C."/>
            <person name="O'Laughlin M.D."/>
            <person name="Schaller M.E."/>
            <person name="Fewell G.A."/>
            <person name="Delehaunty K.D."/>
            <person name="Miner T.L."/>
            <person name="Nash W.E."/>
            <person name="Cordes M."/>
            <person name="Du H."/>
            <person name="Sun H."/>
            <person name="Edwards J."/>
            <person name="Bradshaw-Cordum H."/>
            <person name="Ali J."/>
            <person name="Andrews S."/>
            <person name="Isak A."/>
            <person name="Vanbrunt A."/>
            <person name="Nguyen C."/>
            <person name="Du F."/>
            <person name="Lamar B."/>
            <person name="Courtney L."/>
            <person name="Kalicki J."/>
            <person name="Ozersky P."/>
            <person name="Bielicki L."/>
            <person name="Scott K."/>
            <person name="Holmes A."/>
            <person name="Harkins R."/>
            <person name="Harris A."/>
            <person name="Strong C.M."/>
            <person name="Hou S."/>
            <person name="Tomlinson C."/>
            <person name="Dauphin-Kohlberg S."/>
            <person name="Kozlowicz-Reilly A."/>
            <person name="Leonard S."/>
            <person name="Rohlfing T."/>
            <person name="Rock S.M."/>
            <person name="Tin-Wollam A.-M."/>
            <person name="Abbott A."/>
            <person name="Minx P."/>
            <person name="Maupin R."/>
            <person name="Strowmatt C."/>
            <person name="Latreille P."/>
            <person name="Miller N."/>
            <person name="Johnson D."/>
            <person name="Murray J."/>
            <person name="Woessner J.P."/>
            <person name="Wendl M.C."/>
            <person name="Yang S.-P."/>
            <person name="Schultz B.R."/>
            <person name="Wallis J.W."/>
            <person name="Spieth J."/>
            <person name="Bieri T.A."/>
            <person name="Nelson J.O."/>
            <person name="Berkowicz N."/>
            <person name="Wohldmann P.E."/>
            <person name="Cook L.L."/>
            <person name="Hickenbotham M.T."/>
            <person name="Eldred J."/>
            <person name="Williams D."/>
            <person name="Bedell J.A."/>
            <person name="Mardis E.R."/>
            <person name="Clifton S.W."/>
            <person name="Chissoe S.L."/>
            <person name="Marra M.A."/>
            <person name="Raymond C."/>
            <person name="Haugen E."/>
            <person name="Gillett W."/>
            <person name="Zhou Y."/>
            <person name="James R."/>
            <person name="Phelps K."/>
            <person name="Iadanoto S."/>
            <person name="Bubb K."/>
            <person name="Simms E."/>
            <person name="Levy R."/>
            <person name="Clendenning J."/>
            <person name="Kaul R."/>
            <person name="Kent W.J."/>
            <person name="Furey T.S."/>
            <person name="Baertsch R.A."/>
            <person name="Brent M.R."/>
            <person name="Keibler E."/>
            <person name="Flicek P."/>
            <person name="Bork P."/>
            <person name="Suyama M."/>
            <person name="Bailey J.A."/>
            <person name="Portnoy M.E."/>
            <person name="Torrents D."/>
            <person name="Chinwalla A.T."/>
            <person name="Gish W.R."/>
            <person name="Eddy S.R."/>
            <person name="McPherson J.D."/>
            <person name="Olson M.V."/>
            <person name="Eichler E.E."/>
            <person name="Green E.D."/>
            <person name="Waterston R.H."/>
            <person name="Wilson R.K."/>
        </authorList>
    </citation>
    <scope>NUCLEOTIDE SEQUENCE [LARGE SCALE GENOMIC DNA] (IMGT ALLELE TRBV2*01)</scope>
</reference>
<reference key="2">
    <citation type="book" date="2001" name="The T Cell Receptor FactsBook.">
        <title>The T Cell Receptor FactsBook.</title>
        <editorList>
            <person name="Lefranc M.P."/>
            <person name="Lefranc G."/>
        </editorList>
        <authorList>
            <person name="Lefranc M.P."/>
            <person name="Lefranc G."/>
        </authorList>
    </citation>
    <scope>NOMENCLATURE</scope>
</reference>
<reference key="3">
    <citation type="journal article" date="2004" name="Nat. Rev. Immunol.">
        <title>The many important facets of T-cell repertoire diversity.</title>
        <authorList>
            <person name="Nikolich-Zugich J."/>
            <person name="Slifka M.K."/>
            <person name="Messaoudi I."/>
        </authorList>
    </citation>
    <scope>REVIEW ON T CELL REPERTOIRE DIVERSITY</scope>
</reference>
<reference key="4">
    <citation type="journal article" date="2010" name="Cold Spring Harb. Perspect. Biol.">
        <title>Structural biology of the T-cell receptor: insights into receptor assembly, ligand recognition, and initiation of signaling.</title>
        <authorList>
            <person name="Wucherpfennig K.W."/>
            <person name="Gagnon E."/>
            <person name="Call M.J."/>
            <person name="Huseby E.S."/>
            <person name="Call M.E."/>
        </authorList>
    </citation>
    <scope>REVIEW ON T CELL RECEPTOR-CD3 COMPLEX ASSEMBLY</scope>
    <scope>SUBCELLULAR LOCATION</scope>
</reference>
<reference key="5">
    <citation type="journal article" date="2013" name="Nat. Rev. Immunol.">
        <title>T cell receptor signalling networks: branched, diversified and bounded.</title>
        <authorList>
            <person name="Brownlie R.J."/>
            <person name="Zamoyska R."/>
        </authorList>
    </citation>
    <scope>REVIEW ON T CELL RECEPTOR SIGNALING</scope>
</reference>
<reference key="6">
    <citation type="journal article" date="2014" name="Front. Immunol.">
        <title>Immunoglobulin and T Cell Receptor Genes: IMGT((R)) and the Birth and Rise of Immunoinformatics.</title>
        <authorList>
            <person name="Lefranc M.P."/>
        </authorList>
    </citation>
    <scope>NOMENCLATURE</scope>
</reference>
<reference key="7">
    <citation type="journal article" date="2015" name="Annu. Rev. Immunol.">
        <title>T cell antigen receptor recognition of antigen-presenting molecules.</title>
        <authorList>
            <person name="Rossjohn J."/>
            <person name="Gras S."/>
            <person name="Miles J.J."/>
            <person name="Turner S.J."/>
            <person name="Godfrey D.I."/>
            <person name="McCluskey J."/>
        </authorList>
    </citation>
    <scope>REVIEW ON FUNCTION</scope>
</reference>
<feature type="signal peptide" evidence="1">
    <location>
        <begin position="1"/>
        <end position="19"/>
    </location>
</feature>
<feature type="chain" id="PRO_5008408712" description="T cell receptor beta variable 2" evidence="1">
    <location>
        <begin position="20"/>
        <end position="115"/>
    </location>
</feature>
<feature type="domain" description="Ig-like" evidence="2">
    <location>
        <begin position="21"/>
        <end position="115" status="greater than"/>
    </location>
</feature>
<feature type="glycosylation site" description="N-linked (GlcNAc...) asparagine" evidence="1">
    <location>
        <position position="93"/>
    </location>
</feature>
<feature type="disulfide bond" evidence="2">
    <location>
        <begin position="42"/>
        <end position="111"/>
    </location>
</feature>
<feature type="non-terminal residue">
    <location>
        <position position="115"/>
    </location>
</feature>
<accession>A0A1B0GX68</accession>
<sequence>MDTWLVCWAIFSLLKAGLTEPEVTQTPSHQVTQMGQEVILRCVPISNHLYFYWYRQILGQKVEFLVSFYNNEISEKSEIFDDQFSVERPDGSNFTLKIRSTKLEDSAMYFCASSE</sequence>
<organism>
    <name type="scientific">Homo sapiens</name>
    <name type="common">Human</name>
    <dbReference type="NCBI Taxonomy" id="9606"/>
    <lineage>
        <taxon>Eukaryota</taxon>
        <taxon>Metazoa</taxon>
        <taxon>Chordata</taxon>
        <taxon>Craniata</taxon>
        <taxon>Vertebrata</taxon>
        <taxon>Euteleostomi</taxon>
        <taxon>Mammalia</taxon>
        <taxon>Eutheria</taxon>
        <taxon>Euarchontoglires</taxon>
        <taxon>Primates</taxon>
        <taxon>Haplorrhini</taxon>
        <taxon>Catarrhini</taxon>
        <taxon>Hominidae</taxon>
        <taxon>Homo</taxon>
    </lineage>
</organism>